<accession>Q12FD4</accession>
<evidence type="ECO:0000255" key="1">
    <source>
        <dbReference type="HAMAP-Rule" id="MF_00111"/>
    </source>
</evidence>
<gene>
    <name evidence="1" type="primary">murA</name>
    <name type="ordered locus">Bpro_0802</name>
</gene>
<dbReference type="EC" id="2.5.1.7" evidence="1"/>
<dbReference type="EMBL" id="CP000316">
    <property type="protein sequence ID" value="ABE42758.1"/>
    <property type="molecule type" value="Genomic_DNA"/>
</dbReference>
<dbReference type="RefSeq" id="WP_011481761.1">
    <property type="nucleotide sequence ID" value="NC_007948.1"/>
</dbReference>
<dbReference type="SMR" id="Q12FD4"/>
<dbReference type="STRING" id="296591.Bpro_0802"/>
<dbReference type="KEGG" id="pol:Bpro_0802"/>
<dbReference type="eggNOG" id="COG0766">
    <property type="taxonomic scope" value="Bacteria"/>
</dbReference>
<dbReference type="HOGENOM" id="CLU_027387_0_0_4"/>
<dbReference type="OrthoDB" id="9803760at2"/>
<dbReference type="UniPathway" id="UPA00219"/>
<dbReference type="Proteomes" id="UP000001983">
    <property type="component" value="Chromosome"/>
</dbReference>
<dbReference type="GO" id="GO:0005737">
    <property type="term" value="C:cytoplasm"/>
    <property type="evidence" value="ECO:0007669"/>
    <property type="project" value="UniProtKB-SubCell"/>
</dbReference>
<dbReference type="GO" id="GO:0008760">
    <property type="term" value="F:UDP-N-acetylglucosamine 1-carboxyvinyltransferase activity"/>
    <property type="evidence" value="ECO:0007669"/>
    <property type="project" value="UniProtKB-UniRule"/>
</dbReference>
<dbReference type="GO" id="GO:0051301">
    <property type="term" value="P:cell division"/>
    <property type="evidence" value="ECO:0007669"/>
    <property type="project" value="UniProtKB-KW"/>
</dbReference>
<dbReference type="GO" id="GO:0071555">
    <property type="term" value="P:cell wall organization"/>
    <property type="evidence" value="ECO:0007669"/>
    <property type="project" value="UniProtKB-KW"/>
</dbReference>
<dbReference type="GO" id="GO:0009252">
    <property type="term" value="P:peptidoglycan biosynthetic process"/>
    <property type="evidence" value="ECO:0007669"/>
    <property type="project" value="UniProtKB-UniRule"/>
</dbReference>
<dbReference type="GO" id="GO:0008360">
    <property type="term" value="P:regulation of cell shape"/>
    <property type="evidence" value="ECO:0007669"/>
    <property type="project" value="UniProtKB-KW"/>
</dbReference>
<dbReference type="GO" id="GO:0019277">
    <property type="term" value="P:UDP-N-acetylgalactosamine biosynthetic process"/>
    <property type="evidence" value="ECO:0007669"/>
    <property type="project" value="InterPro"/>
</dbReference>
<dbReference type="CDD" id="cd01555">
    <property type="entry name" value="UdpNAET"/>
    <property type="match status" value="1"/>
</dbReference>
<dbReference type="FunFam" id="3.65.10.10:FF:000001">
    <property type="entry name" value="UDP-N-acetylglucosamine 1-carboxyvinyltransferase"/>
    <property type="match status" value="1"/>
</dbReference>
<dbReference type="Gene3D" id="3.65.10.10">
    <property type="entry name" value="Enolpyruvate transferase domain"/>
    <property type="match status" value="2"/>
</dbReference>
<dbReference type="HAMAP" id="MF_00111">
    <property type="entry name" value="MurA"/>
    <property type="match status" value="1"/>
</dbReference>
<dbReference type="InterPro" id="IPR001986">
    <property type="entry name" value="Enolpyruvate_Tfrase_dom"/>
</dbReference>
<dbReference type="InterPro" id="IPR036968">
    <property type="entry name" value="Enolpyruvate_Tfrase_sf"/>
</dbReference>
<dbReference type="InterPro" id="IPR050068">
    <property type="entry name" value="MurA_subfamily"/>
</dbReference>
<dbReference type="InterPro" id="IPR013792">
    <property type="entry name" value="RNA3'P_cycl/enolpyr_Trfase_a/b"/>
</dbReference>
<dbReference type="InterPro" id="IPR005750">
    <property type="entry name" value="UDP_GlcNAc_COvinyl_MurA"/>
</dbReference>
<dbReference type="NCBIfam" id="TIGR01072">
    <property type="entry name" value="murA"/>
    <property type="match status" value="1"/>
</dbReference>
<dbReference type="NCBIfam" id="NF006873">
    <property type="entry name" value="PRK09369.1"/>
    <property type="match status" value="1"/>
</dbReference>
<dbReference type="PANTHER" id="PTHR43783">
    <property type="entry name" value="UDP-N-ACETYLGLUCOSAMINE 1-CARBOXYVINYLTRANSFERASE"/>
    <property type="match status" value="1"/>
</dbReference>
<dbReference type="PANTHER" id="PTHR43783:SF1">
    <property type="entry name" value="UDP-N-ACETYLGLUCOSAMINE 1-CARBOXYVINYLTRANSFERASE"/>
    <property type="match status" value="1"/>
</dbReference>
<dbReference type="Pfam" id="PF00275">
    <property type="entry name" value="EPSP_synthase"/>
    <property type="match status" value="1"/>
</dbReference>
<dbReference type="SUPFAM" id="SSF55205">
    <property type="entry name" value="EPT/RTPC-like"/>
    <property type="match status" value="1"/>
</dbReference>
<keyword id="KW-0131">Cell cycle</keyword>
<keyword id="KW-0132">Cell division</keyword>
<keyword id="KW-0133">Cell shape</keyword>
<keyword id="KW-0961">Cell wall biogenesis/degradation</keyword>
<keyword id="KW-0963">Cytoplasm</keyword>
<keyword id="KW-0573">Peptidoglycan synthesis</keyword>
<keyword id="KW-0670">Pyruvate</keyword>
<keyword id="KW-1185">Reference proteome</keyword>
<keyword id="KW-0808">Transferase</keyword>
<organism>
    <name type="scientific">Polaromonas sp. (strain JS666 / ATCC BAA-500)</name>
    <dbReference type="NCBI Taxonomy" id="296591"/>
    <lineage>
        <taxon>Bacteria</taxon>
        <taxon>Pseudomonadati</taxon>
        <taxon>Pseudomonadota</taxon>
        <taxon>Betaproteobacteria</taxon>
        <taxon>Burkholderiales</taxon>
        <taxon>Comamonadaceae</taxon>
        <taxon>Polaromonas</taxon>
    </lineage>
</organism>
<reference key="1">
    <citation type="journal article" date="2008" name="Appl. Environ. Microbiol.">
        <title>The genome of Polaromonas sp. strain JS666: insights into the evolution of a hydrocarbon- and xenobiotic-degrading bacterium, and features of relevance to biotechnology.</title>
        <authorList>
            <person name="Mattes T.E."/>
            <person name="Alexander A.K."/>
            <person name="Richardson P.M."/>
            <person name="Munk A.C."/>
            <person name="Han C.S."/>
            <person name="Stothard P."/>
            <person name="Coleman N.V."/>
        </authorList>
    </citation>
    <scope>NUCLEOTIDE SEQUENCE [LARGE SCALE GENOMIC DNA]</scope>
    <source>
        <strain>JS666 / ATCC BAA-500</strain>
    </source>
</reference>
<proteinExistence type="inferred from homology"/>
<protein>
    <recommendedName>
        <fullName evidence="1">UDP-N-acetylglucosamine 1-carboxyvinyltransferase</fullName>
        <ecNumber evidence="1">2.5.1.7</ecNumber>
    </recommendedName>
    <alternativeName>
        <fullName evidence="1">Enoylpyruvate transferase</fullName>
    </alternativeName>
    <alternativeName>
        <fullName evidence="1">UDP-N-acetylglucosamine enolpyruvyl transferase</fullName>
        <shortName evidence="1">EPT</shortName>
    </alternativeName>
</protein>
<feature type="chain" id="PRO_1000023065" description="UDP-N-acetylglucosamine 1-carboxyvinyltransferase">
    <location>
        <begin position="1"/>
        <end position="424"/>
    </location>
</feature>
<feature type="active site" description="Proton donor" evidence="1">
    <location>
        <position position="119"/>
    </location>
</feature>
<feature type="binding site" evidence="1">
    <location>
        <begin position="22"/>
        <end position="23"/>
    </location>
    <ligand>
        <name>phosphoenolpyruvate</name>
        <dbReference type="ChEBI" id="CHEBI:58702"/>
    </ligand>
</feature>
<feature type="binding site" evidence="1">
    <location>
        <position position="95"/>
    </location>
    <ligand>
        <name>UDP-N-acetyl-alpha-D-glucosamine</name>
        <dbReference type="ChEBI" id="CHEBI:57705"/>
    </ligand>
</feature>
<feature type="binding site" evidence="1">
    <location>
        <begin position="124"/>
        <end position="128"/>
    </location>
    <ligand>
        <name>UDP-N-acetyl-alpha-D-glucosamine</name>
        <dbReference type="ChEBI" id="CHEBI:57705"/>
    </ligand>
</feature>
<feature type="binding site" evidence="1">
    <location>
        <position position="311"/>
    </location>
    <ligand>
        <name>UDP-N-acetyl-alpha-D-glucosamine</name>
        <dbReference type="ChEBI" id="CHEBI:57705"/>
    </ligand>
</feature>
<feature type="binding site" evidence="1">
    <location>
        <position position="333"/>
    </location>
    <ligand>
        <name>UDP-N-acetyl-alpha-D-glucosamine</name>
        <dbReference type="ChEBI" id="CHEBI:57705"/>
    </ligand>
</feature>
<feature type="modified residue" description="2-(S-cysteinyl)pyruvic acid O-phosphothioketal" evidence="1">
    <location>
        <position position="119"/>
    </location>
</feature>
<comment type="function">
    <text evidence="1">Cell wall formation. Adds enolpyruvyl to UDP-N-acetylglucosamine.</text>
</comment>
<comment type="catalytic activity">
    <reaction evidence="1">
        <text>phosphoenolpyruvate + UDP-N-acetyl-alpha-D-glucosamine = UDP-N-acetyl-3-O-(1-carboxyvinyl)-alpha-D-glucosamine + phosphate</text>
        <dbReference type="Rhea" id="RHEA:18681"/>
        <dbReference type="ChEBI" id="CHEBI:43474"/>
        <dbReference type="ChEBI" id="CHEBI:57705"/>
        <dbReference type="ChEBI" id="CHEBI:58702"/>
        <dbReference type="ChEBI" id="CHEBI:68483"/>
        <dbReference type="EC" id="2.5.1.7"/>
    </reaction>
</comment>
<comment type="pathway">
    <text evidence="1">Cell wall biogenesis; peptidoglycan biosynthesis.</text>
</comment>
<comment type="subcellular location">
    <subcellularLocation>
        <location evidence="1">Cytoplasm</location>
    </subcellularLocation>
</comment>
<comment type="similarity">
    <text evidence="1">Belongs to the EPSP synthase family. MurA subfamily.</text>
</comment>
<sequence>MDKLLIKGGRSLAGTVDISGAKNAALPELCAALLTADTVTLENVPRLQDVATMLKLIRNMGVEAERGTHAPGTVTLHAGALSSPEAPYELVKTMRASVLALGPLLARFGEATVSLPGGCAIGSRPVDQHIKGLQAMGAEIVVEHGYMIAKLPAGQKRLKGVSITTDMVTVTGTENFLMAASLAEGETILENAAQEPEIGDLADMLIKMGAKIEGHGTRRIRIQGVERLHGCTHQVVADRIETGTFLCAVAAAGGDVVLRHGRADHLDAVIDKLREAGATITAGEGFIRIQAQGRMKAQSFRTTEYPGFPTDMQAQFMALNAIAQGSSTVTETIFENRFMHVNEMVRLGAKIQIEGKAAVMEGVEKLSGATVMATDLRASASLVIAGLVAEGETLVDRIYHLDRGYDQMEAKLRGIGADIERVRA</sequence>
<name>MURA_POLSJ</name>